<reference key="1">
    <citation type="journal article" date="1995" name="J. Bacteriol.">
        <title>Overlapping substrate specificities of benzaldehyde dehydrogenase (the xylC gene product) and 2-hydroxymuconic semialdehyde dehydrogenase (the xylG gene product) encoded by TOL plasmid pWW0 of Pseudomonas putida.</title>
        <authorList>
            <person name="Inoue J."/>
            <person name="Shaw J.P."/>
            <person name="Rekik M."/>
            <person name="Harayama S."/>
        </authorList>
    </citation>
    <scope>NUCLEOTIDE SEQUENCE [GENOMIC DNA]</scope>
    <scope>PROTEIN SEQUENCE OF 1-15</scope>
    <source>
        <plasmid>TOL pWW0</plasmid>
    </source>
</reference>
<reference key="2">
    <citation type="journal article" date="1991" name="Biochem. J.">
        <title>Comparison of benzyl alcohol dehydrogenases and benzaldehyde dehydrogenases from the benzyl alcohol and mandelate pathways in Acinetobacter calcoaceticus and from the TOL-plasmid-encoded toluene pathway in Pseudomonas putida. N-terminal amino acid sequences, amino acid compositions and immunological cross-reactions.</title>
        <authorList>
            <person name="Chalmers R.M."/>
            <person name="Keen J.N."/>
            <person name="Fewson C.A."/>
        </authorList>
    </citation>
    <scope>PROTEIN SEQUENCE OF 1-53</scope>
    <source>
        <plasmid>TOL pWW53</plasmid>
    </source>
</reference>
<name>XYLC_PSEPU</name>
<sequence>MRETKEQPIWYGKVFSSNWVEARGGVANVVDPSNGDILGITGVANGEDVDAAVNAAKRAQKEWAAIPFSERAAIVRKAAEKLKEREYEFADWNVRECGAIRPKGLWEAGIAYEQMHQAAGLASLPNGTLFPSAVPGRMNLCQRVPVGVVGVIAPWNFPLFLAMRSVAPALALGNAVILKPDLQTAVTGGALIAEIFSDAGMPDGVLHVLPGGADVGESMVANSGINMISFTGSTQVGRLIGEKCGRMLKKVALELGGNNVHIVLPDADLEGAVSCAAWGTFLHQGQVCMAAGRHLVHRDVAQQYAEKLALRAKNLVVGDPNSDQVHLGPLINEKQVVRVHALVESAQRAGAQVLAGGTYQDRYYQATVIMDVKPEMEVFKSEIFGPVAPITVFDSIEEAIELANCSEYGLAASIHTRALATGLDIAKRLNTGMVHINDQPINCEPHVPFGGMGASGSGGRFGGPASIEEFTQSQWISMVEKPANYPF</sequence>
<keyword id="KW-0058">Aromatic hydrocarbons catabolism</keyword>
<keyword id="KW-0903">Direct protein sequencing</keyword>
<keyword id="KW-0520">NAD</keyword>
<keyword id="KW-0560">Oxidoreductase</keyword>
<keyword id="KW-0614">Plasmid</keyword>
<evidence type="ECO:0000250" key="1"/>
<evidence type="ECO:0000305" key="2"/>
<geneLocation type="plasmid">
    <name>TOL pWW0</name>
</geneLocation>
<geneLocation type="plasmid">
    <name>TOL pWW53</name>
</geneLocation>
<protein>
    <recommendedName>
        <fullName>Benzaldehyde dehydrogenase [NAD(+)]</fullName>
        <ecNumber>1.2.1.28</ecNumber>
    </recommendedName>
</protein>
<accession>P43503</accession>
<proteinExistence type="evidence at protein level"/>
<gene>
    <name type="primary">xylC</name>
</gene>
<organism>
    <name type="scientific">Pseudomonas putida</name>
    <name type="common">Arthrobacter siderocapsulatus</name>
    <dbReference type="NCBI Taxonomy" id="303"/>
    <lineage>
        <taxon>Bacteria</taxon>
        <taxon>Pseudomonadati</taxon>
        <taxon>Pseudomonadota</taxon>
        <taxon>Gammaproteobacteria</taxon>
        <taxon>Pseudomonadales</taxon>
        <taxon>Pseudomonadaceae</taxon>
        <taxon>Pseudomonas</taxon>
    </lineage>
</organism>
<dbReference type="EC" id="1.2.1.28"/>
<dbReference type="EMBL" id="U15151">
    <property type="protein sequence ID" value="AAA66218.1"/>
    <property type="molecule type" value="Genomic_DNA"/>
</dbReference>
<dbReference type="EMBL" id="D63341">
    <property type="protein sequence ID" value="BAA09661.1"/>
    <property type="molecule type" value="Genomic_DNA"/>
</dbReference>
<dbReference type="PIR" id="T47107">
    <property type="entry name" value="T47107"/>
</dbReference>
<dbReference type="RefSeq" id="NP_542888.1">
    <property type="nucleotide sequence ID" value="NC_003350.1"/>
</dbReference>
<dbReference type="RefSeq" id="WP_011005931.1">
    <property type="nucleotide sequence ID" value="NZ_LT852425.1"/>
</dbReference>
<dbReference type="SMR" id="P43503"/>
<dbReference type="KEGG" id="ag:AAA66218"/>
<dbReference type="BioCyc" id="MetaCyc:MONOMER-2968"/>
<dbReference type="GO" id="GO:0018479">
    <property type="term" value="F:benzaldehyde dehydrogenase (NAD+) activity"/>
    <property type="evidence" value="ECO:0007669"/>
    <property type="project" value="UniProtKB-EC"/>
</dbReference>
<dbReference type="GO" id="GO:0009056">
    <property type="term" value="P:catabolic process"/>
    <property type="evidence" value="ECO:0007669"/>
    <property type="project" value="UniProtKB-KW"/>
</dbReference>
<dbReference type="CDD" id="cd07152">
    <property type="entry name" value="ALDH_BenzADH"/>
    <property type="match status" value="1"/>
</dbReference>
<dbReference type="FunFam" id="3.40.605.10:FF:000007">
    <property type="entry name" value="NAD/NADP-dependent betaine aldehyde dehydrogenase"/>
    <property type="match status" value="1"/>
</dbReference>
<dbReference type="Gene3D" id="3.40.605.10">
    <property type="entry name" value="Aldehyde Dehydrogenase, Chain A, domain 1"/>
    <property type="match status" value="1"/>
</dbReference>
<dbReference type="Gene3D" id="3.40.309.10">
    <property type="entry name" value="Aldehyde Dehydrogenase, Chain A, domain 2"/>
    <property type="match status" value="1"/>
</dbReference>
<dbReference type="InterPro" id="IPR016161">
    <property type="entry name" value="Ald_DH/histidinol_DH"/>
</dbReference>
<dbReference type="InterPro" id="IPR016163">
    <property type="entry name" value="Ald_DH_C"/>
</dbReference>
<dbReference type="InterPro" id="IPR016160">
    <property type="entry name" value="Ald_DH_CS_CYS"/>
</dbReference>
<dbReference type="InterPro" id="IPR029510">
    <property type="entry name" value="Ald_DH_CS_GLU"/>
</dbReference>
<dbReference type="InterPro" id="IPR016162">
    <property type="entry name" value="Ald_DH_N"/>
</dbReference>
<dbReference type="InterPro" id="IPR015590">
    <property type="entry name" value="Aldehyde_DH_dom"/>
</dbReference>
<dbReference type="PANTHER" id="PTHR42986">
    <property type="entry name" value="BENZALDEHYDE DEHYDROGENASE YFMT"/>
    <property type="match status" value="1"/>
</dbReference>
<dbReference type="PANTHER" id="PTHR42986:SF1">
    <property type="entry name" value="BENZALDEHYDE DEHYDROGENASE YFMT"/>
    <property type="match status" value="1"/>
</dbReference>
<dbReference type="Pfam" id="PF00171">
    <property type="entry name" value="Aldedh"/>
    <property type="match status" value="1"/>
</dbReference>
<dbReference type="SUPFAM" id="SSF53720">
    <property type="entry name" value="ALDH-like"/>
    <property type="match status" value="1"/>
</dbReference>
<dbReference type="PROSITE" id="PS00070">
    <property type="entry name" value="ALDEHYDE_DEHYDR_CYS"/>
    <property type="match status" value="1"/>
</dbReference>
<dbReference type="PROSITE" id="PS00687">
    <property type="entry name" value="ALDEHYDE_DEHYDR_GLU"/>
    <property type="match status" value="1"/>
</dbReference>
<comment type="catalytic activity">
    <reaction>
        <text>benzaldehyde + NAD(+) + H2O = benzoate + NADH + 2 H(+)</text>
        <dbReference type="Rhea" id="RHEA:11840"/>
        <dbReference type="ChEBI" id="CHEBI:15377"/>
        <dbReference type="ChEBI" id="CHEBI:15378"/>
        <dbReference type="ChEBI" id="CHEBI:16150"/>
        <dbReference type="ChEBI" id="CHEBI:17169"/>
        <dbReference type="ChEBI" id="CHEBI:57540"/>
        <dbReference type="ChEBI" id="CHEBI:57945"/>
        <dbReference type="EC" id="1.2.1.28"/>
    </reaction>
</comment>
<comment type="biophysicochemical properties">
    <phDependence>
        <text>Optimum pH is 9.0.</text>
    </phDependence>
</comment>
<comment type="subunit">
    <text>Homotetramer.</text>
</comment>
<comment type="similarity">
    <text evidence="2">Belongs to the aldehyde dehydrogenase family.</text>
</comment>
<feature type="chain" id="PRO_0000056591" description="Benzaldehyde dehydrogenase [NAD(+)]">
    <location>
        <begin position="1"/>
        <end position="487"/>
    </location>
</feature>
<feature type="active site" evidence="1">
    <location>
        <position position="254"/>
    </location>
</feature>
<feature type="active site" evidence="1">
    <location>
        <position position="288"/>
    </location>
</feature>
<feature type="binding site" evidence="1">
    <location>
        <begin position="232"/>
        <end position="237"/>
    </location>
    <ligand>
        <name>NAD(+)</name>
        <dbReference type="ChEBI" id="CHEBI:57540"/>
    </ligand>
</feature>